<protein>
    <recommendedName>
        <fullName evidence="1">Hydrogenase maturation factor HypA</fullName>
    </recommendedName>
</protein>
<organism>
    <name type="scientific">Methylocella silvestris (strain DSM 15510 / CIP 108128 / LMG 27833 / NCIMB 13906 / BL2)</name>
    <dbReference type="NCBI Taxonomy" id="395965"/>
    <lineage>
        <taxon>Bacteria</taxon>
        <taxon>Pseudomonadati</taxon>
        <taxon>Pseudomonadota</taxon>
        <taxon>Alphaproteobacteria</taxon>
        <taxon>Hyphomicrobiales</taxon>
        <taxon>Beijerinckiaceae</taxon>
        <taxon>Methylocella</taxon>
    </lineage>
</organism>
<accession>B8ERW8</accession>
<evidence type="ECO:0000255" key="1">
    <source>
        <dbReference type="HAMAP-Rule" id="MF_00213"/>
    </source>
</evidence>
<reference key="1">
    <citation type="journal article" date="2010" name="J. Bacteriol.">
        <title>Complete genome sequence of the aerobic facultative methanotroph Methylocella silvestris BL2.</title>
        <authorList>
            <person name="Chen Y."/>
            <person name="Crombie A."/>
            <person name="Rahman M.T."/>
            <person name="Dedysh S.N."/>
            <person name="Liesack W."/>
            <person name="Stott M.B."/>
            <person name="Alam M."/>
            <person name="Theisen A.R."/>
            <person name="Murrell J.C."/>
            <person name="Dunfield P.F."/>
        </authorList>
    </citation>
    <scope>NUCLEOTIDE SEQUENCE [LARGE SCALE GENOMIC DNA]</scope>
    <source>
        <strain>DSM 15510 / CIP 108128 / LMG 27833 / NCIMB 13906 / BL2</strain>
    </source>
</reference>
<proteinExistence type="inferred from homology"/>
<gene>
    <name evidence="1" type="primary">hypA</name>
    <name type="ordered locus">Msil_2745</name>
</gene>
<name>HYPA_METSB</name>
<dbReference type="EMBL" id="CP001280">
    <property type="protein sequence ID" value="ACK51666.1"/>
    <property type="molecule type" value="Genomic_DNA"/>
</dbReference>
<dbReference type="RefSeq" id="WP_012591735.1">
    <property type="nucleotide sequence ID" value="NC_011666.1"/>
</dbReference>
<dbReference type="SMR" id="B8ERW8"/>
<dbReference type="STRING" id="395965.Msil_2745"/>
<dbReference type="KEGG" id="msl:Msil_2745"/>
<dbReference type="eggNOG" id="COG0375">
    <property type="taxonomic scope" value="Bacteria"/>
</dbReference>
<dbReference type="HOGENOM" id="CLU_126929_0_0_5"/>
<dbReference type="OrthoDB" id="288014at2"/>
<dbReference type="Proteomes" id="UP000002257">
    <property type="component" value="Chromosome"/>
</dbReference>
<dbReference type="GO" id="GO:0016151">
    <property type="term" value="F:nickel cation binding"/>
    <property type="evidence" value="ECO:0007669"/>
    <property type="project" value="UniProtKB-UniRule"/>
</dbReference>
<dbReference type="GO" id="GO:0008270">
    <property type="term" value="F:zinc ion binding"/>
    <property type="evidence" value="ECO:0007669"/>
    <property type="project" value="UniProtKB-UniRule"/>
</dbReference>
<dbReference type="GO" id="GO:0051604">
    <property type="term" value="P:protein maturation"/>
    <property type="evidence" value="ECO:0007669"/>
    <property type="project" value="InterPro"/>
</dbReference>
<dbReference type="GO" id="GO:0036211">
    <property type="term" value="P:protein modification process"/>
    <property type="evidence" value="ECO:0007669"/>
    <property type="project" value="UniProtKB-UniRule"/>
</dbReference>
<dbReference type="Gene3D" id="3.30.2320.80">
    <property type="match status" value="1"/>
</dbReference>
<dbReference type="HAMAP" id="MF_00213">
    <property type="entry name" value="HypA_HybF"/>
    <property type="match status" value="1"/>
</dbReference>
<dbReference type="InterPro" id="IPR000688">
    <property type="entry name" value="HypA/HybF"/>
</dbReference>
<dbReference type="NCBIfam" id="TIGR00100">
    <property type="entry name" value="hypA"/>
    <property type="match status" value="1"/>
</dbReference>
<dbReference type="PANTHER" id="PTHR34535">
    <property type="entry name" value="HYDROGENASE MATURATION FACTOR HYPA"/>
    <property type="match status" value="1"/>
</dbReference>
<dbReference type="PANTHER" id="PTHR34535:SF3">
    <property type="entry name" value="HYDROGENASE MATURATION FACTOR HYPA"/>
    <property type="match status" value="1"/>
</dbReference>
<dbReference type="Pfam" id="PF01155">
    <property type="entry name" value="HypA"/>
    <property type="match status" value="1"/>
</dbReference>
<dbReference type="PIRSF" id="PIRSF004761">
    <property type="entry name" value="Hydrgn_mat_HypA"/>
    <property type="match status" value="1"/>
</dbReference>
<comment type="function">
    <text evidence="1">Involved in the maturation of [NiFe] hydrogenases. Required for nickel insertion into the metal center of the hydrogenase.</text>
</comment>
<comment type="similarity">
    <text evidence="1">Belongs to the HypA/HybF family.</text>
</comment>
<sequence>MHEISLIESVVALVEDERRKQDFSRVRMIRLRLGALGHAEPEALRFCFDAVTRGTIAEGARLDIDIVLGEGWCSSCSRTVPLEERFAACPICGNAPVQMTAGDELRVAEMEVE</sequence>
<feature type="chain" id="PRO_1000124776" description="Hydrogenase maturation factor HypA">
    <location>
        <begin position="1"/>
        <end position="113"/>
    </location>
</feature>
<feature type="binding site" evidence="1">
    <location>
        <position position="2"/>
    </location>
    <ligand>
        <name>Ni(2+)</name>
        <dbReference type="ChEBI" id="CHEBI:49786"/>
    </ligand>
</feature>
<feature type="binding site" evidence="1">
    <location>
        <position position="73"/>
    </location>
    <ligand>
        <name>Zn(2+)</name>
        <dbReference type="ChEBI" id="CHEBI:29105"/>
    </ligand>
</feature>
<feature type="binding site" evidence="1">
    <location>
        <position position="76"/>
    </location>
    <ligand>
        <name>Zn(2+)</name>
        <dbReference type="ChEBI" id="CHEBI:29105"/>
    </ligand>
</feature>
<feature type="binding site" evidence="1">
    <location>
        <position position="89"/>
    </location>
    <ligand>
        <name>Zn(2+)</name>
        <dbReference type="ChEBI" id="CHEBI:29105"/>
    </ligand>
</feature>
<feature type="binding site" evidence="1">
    <location>
        <position position="92"/>
    </location>
    <ligand>
        <name>Zn(2+)</name>
        <dbReference type="ChEBI" id="CHEBI:29105"/>
    </ligand>
</feature>
<keyword id="KW-0479">Metal-binding</keyword>
<keyword id="KW-0533">Nickel</keyword>
<keyword id="KW-1185">Reference proteome</keyword>
<keyword id="KW-0862">Zinc</keyword>